<evidence type="ECO:0000255" key="1">
    <source>
        <dbReference type="PROSITE-ProRule" id="PRU00042"/>
    </source>
</evidence>
<evidence type="ECO:0000305" key="2"/>
<name>KRUP_PSYCI</name>
<proteinExistence type="inferred from homology"/>
<protein>
    <recommendedName>
        <fullName>Protein krueppel</fullName>
    </recommendedName>
</protein>
<feature type="chain" id="PRO_0000047000" description="Protein krueppel">
    <location>
        <begin position="1" status="less than"/>
        <end position="74" status="greater than"/>
    </location>
</feature>
<feature type="zinc finger region" description="C2H2-type 1" evidence="1">
    <location>
        <begin position="1" status="less than"/>
        <end position="4"/>
    </location>
</feature>
<feature type="zinc finger region" description="C2H2-type 2" evidence="1">
    <location>
        <begin position="10"/>
        <end position="32"/>
    </location>
</feature>
<feature type="zinc finger region" description="C2H2-type 3" evidence="1">
    <location>
        <begin position="38"/>
        <end position="60"/>
    </location>
</feature>
<feature type="zinc finger region" description="C2H2-type 4" evidence="1">
    <location>
        <begin position="66"/>
        <end position="74" status="greater than"/>
    </location>
</feature>
<feature type="non-terminal residue">
    <location>
        <position position="1"/>
    </location>
</feature>
<feature type="non-terminal residue">
    <location>
        <position position="74"/>
    </location>
</feature>
<organism>
    <name type="scientific">Psychoda cinerea</name>
    <name type="common">Psychod fly</name>
    <dbReference type="NCBI Taxonomy" id="7202"/>
    <lineage>
        <taxon>Eukaryota</taxon>
        <taxon>Metazoa</taxon>
        <taxon>Ecdysozoa</taxon>
        <taxon>Arthropoda</taxon>
        <taxon>Hexapoda</taxon>
        <taxon>Insecta</taxon>
        <taxon>Pterygota</taxon>
        <taxon>Neoptera</taxon>
        <taxon>Endopterygota</taxon>
        <taxon>Diptera</taxon>
        <taxon>Nematocera</taxon>
        <taxon>Psychodoidea</taxon>
        <taxon>Psychodidae</taxon>
        <taxon>Psychoda</taxon>
    </lineage>
</organism>
<comment type="function">
    <text>Krueppel is a gap class segmentation protein.</text>
</comment>
<comment type="subcellular location">
    <subcellularLocation>
        <location evidence="2">Nucleus</location>
    </subcellularLocation>
</comment>
<comment type="similarity">
    <text evidence="2">Belongs to the krueppel C2H2-type zinc-finger protein family.</text>
</comment>
<gene>
    <name type="primary">Kr</name>
</gene>
<keyword id="KW-0217">Developmental protein</keyword>
<keyword id="KW-0238">DNA-binding</keyword>
<keyword id="KW-0302">Gap protein</keyword>
<keyword id="KW-0479">Metal-binding</keyword>
<keyword id="KW-0539">Nucleus</keyword>
<keyword id="KW-0677">Repeat</keyword>
<keyword id="KW-0862">Zinc</keyword>
<keyword id="KW-0863">Zinc-finger</keyword>
<dbReference type="EMBL" id="L01609">
    <property type="protein sequence ID" value="AAA29799.1"/>
    <property type="molecule type" value="Genomic_DNA"/>
</dbReference>
<dbReference type="SMR" id="Q02035"/>
<dbReference type="GO" id="GO:0005634">
    <property type="term" value="C:nucleus"/>
    <property type="evidence" value="ECO:0007669"/>
    <property type="project" value="UniProtKB-SubCell"/>
</dbReference>
<dbReference type="GO" id="GO:0003677">
    <property type="term" value="F:DNA binding"/>
    <property type="evidence" value="ECO:0007669"/>
    <property type="project" value="UniProtKB-KW"/>
</dbReference>
<dbReference type="GO" id="GO:0000981">
    <property type="term" value="F:DNA-binding transcription factor activity, RNA polymerase II-specific"/>
    <property type="evidence" value="ECO:0007669"/>
    <property type="project" value="TreeGrafter"/>
</dbReference>
<dbReference type="GO" id="GO:0008270">
    <property type="term" value="F:zinc ion binding"/>
    <property type="evidence" value="ECO:0007669"/>
    <property type="project" value="UniProtKB-KW"/>
</dbReference>
<dbReference type="GO" id="GO:0035282">
    <property type="term" value="P:segmentation"/>
    <property type="evidence" value="ECO:0007669"/>
    <property type="project" value="UniProtKB-KW"/>
</dbReference>
<dbReference type="FunFam" id="3.30.160.60:FF:002343">
    <property type="entry name" value="Zinc finger protein 33A"/>
    <property type="match status" value="1"/>
</dbReference>
<dbReference type="FunFam" id="3.30.160.60:FF:001954">
    <property type="entry name" value="Zinc finger protein 787"/>
    <property type="match status" value="1"/>
</dbReference>
<dbReference type="Gene3D" id="3.30.160.60">
    <property type="entry name" value="Classic Zinc Finger"/>
    <property type="match status" value="3"/>
</dbReference>
<dbReference type="InterPro" id="IPR036236">
    <property type="entry name" value="Znf_C2H2_sf"/>
</dbReference>
<dbReference type="InterPro" id="IPR013087">
    <property type="entry name" value="Znf_C2H2_type"/>
</dbReference>
<dbReference type="PANTHER" id="PTHR24394:SF29">
    <property type="entry name" value="MYONEURIN"/>
    <property type="match status" value="1"/>
</dbReference>
<dbReference type="PANTHER" id="PTHR24394">
    <property type="entry name" value="ZINC FINGER PROTEIN"/>
    <property type="match status" value="1"/>
</dbReference>
<dbReference type="Pfam" id="PF00096">
    <property type="entry name" value="zf-C2H2"/>
    <property type="match status" value="2"/>
</dbReference>
<dbReference type="SMART" id="SM00355">
    <property type="entry name" value="ZnF_C2H2"/>
    <property type="match status" value="2"/>
</dbReference>
<dbReference type="SUPFAM" id="SSF57667">
    <property type="entry name" value="beta-beta-alpha zinc fingers"/>
    <property type="match status" value="1"/>
</dbReference>
<dbReference type="PROSITE" id="PS00028">
    <property type="entry name" value="ZINC_FINGER_C2H2_1"/>
    <property type="match status" value="2"/>
</dbReference>
<dbReference type="PROSITE" id="PS50157">
    <property type="entry name" value="ZINC_FINGER_C2H2_2"/>
    <property type="match status" value="2"/>
</dbReference>
<reference key="1">
    <citation type="journal article" date="1992" name="Proc. Natl. Acad. Sci. U.S.A.">
        <title>Evolutionary conservation pattern of zinc-finger domains of Drosophila segmentation genes.</title>
        <authorList>
            <person name="Sommer R.J."/>
            <person name="Retzlaff M."/>
            <person name="Goerlich K."/>
            <person name="Sander K."/>
            <person name="Tautz D."/>
        </authorList>
    </citation>
    <scope>NUCLEOTIDE SEQUENCE [GENOMIC DNA]</scope>
</reference>
<sequence>ERTHTGEKPFECPECHKRFTRDHHLKTHMRLHTGEKPYHCSHCDRQFVQVANLRRHLRVHTGERPYACELCDAR</sequence>
<accession>Q02035</accession>